<protein>
    <recommendedName>
        <fullName>U4-theraphotoxin-Hhn1a</fullName>
        <shortName>U4-TRTX-Hhn1a</shortName>
    </recommendedName>
    <alternativeName>
        <fullName>Hainantoxin-II.19</fullName>
        <shortName>HNTX-II.19</shortName>
    </alternativeName>
    <alternativeName>
        <fullName>Peptide F8-20.15</fullName>
    </alternativeName>
</protein>
<proteinExistence type="evidence at protein level"/>
<dbReference type="EMBL" id="GU293083">
    <property type="protein sequence ID" value="ADB56899.1"/>
    <property type="molecule type" value="Genomic_DNA"/>
</dbReference>
<dbReference type="SMR" id="D2Y2K6"/>
<dbReference type="ArachnoServer" id="AS001783">
    <property type="toxin name" value="U4-theraphotoxin-Hhn1a"/>
</dbReference>
<dbReference type="GO" id="GO:0005576">
    <property type="term" value="C:extracellular region"/>
    <property type="evidence" value="ECO:0007669"/>
    <property type="project" value="UniProtKB-SubCell"/>
</dbReference>
<dbReference type="GO" id="GO:0035792">
    <property type="term" value="C:host cell postsynaptic membrane"/>
    <property type="evidence" value="ECO:0007669"/>
    <property type="project" value="UniProtKB-KW"/>
</dbReference>
<dbReference type="GO" id="GO:0090729">
    <property type="term" value="F:toxin activity"/>
    <property type="evidence" value="ECO:0007669"/>
    <property type="project" value="UniProtKB-KW"/>
</dbReference>
<dbReference type="InterPro" id="IPR012625">
    <property type="entry name" value="Hwtx-2-like"/>
</dbReference>
<dbReference type="Pfam" id="PF08089">
    <property type="entry name" value="Toxin_20"/>
    <property type="match status" value="1"/>
</dbReference>
<dbReference type="SUPFAM" id="SSF57059">
    <property type="entry name" value="omega toxin-like"/>
    <property type="match status" value="1"/>
</dbReference>
<dbReference type="PROSITE" id="PS60022">
    <property type="entry name" value="HWTX_2"/>
    <property type="match status" value="1"/>
</dbReference>
<comment type="function">
    <text evidence="1">Postsynaptic neurotoxin.</text>
</comment>
<comment type="subcellular location">
    <subcellularLocation>
        <location>Secreted</location>
    </subcellularLocation>
</comment>
<comment type="tissue specificity">
    <text>Expressed by the venom gland.</text>
</comment>
<comment type="similarity">
    <text evidence="3">Belongs to the neurotoxin 12 (Hwtx-2) family. 02 (Hwtx-2) subfamily.</text>
</comment>
<name>H2A19_CYRHA</name>
<keyword id="KW-0903">Direct protein sequencing</keyword>
<keyword id="KW-1015">Disulfide bond</keyword>
<keyword id="KW-0528">Neurotoxin</keyword>
<keyword id="KW-0629">Postsynaptic neurotoxin</keyword>
<keyword id="KW-0964">Secreted</keyword>
<keyword id="KW-0732">Signal</keyword>
<keyword id="KW-0800">Toxin</keyword>
<reference key="1">
    <citation type="journal article" date="2010" name="J. Proteome Res.">
        <title>Molecular diversification of peptide toxins from the tarantula Haplopelma hainanum (Ornithoctonus hainana) venom based on transcriptomic, peptidomic, and genomic analyses.</title>
        <authorList>
            <person name="Tang X."/>
            <person name="Zhang Y."/>
            <person name="Hu W."/>
            <person name="Xu D."/>
            <person name="Tao H."/>
            <person name="Yang X."/>
            <person name="Li Y."/>
            <person name="Jiang L."/>
            <person name="Liang S."/>
        </authorList>
    </citation>
    <scope>NUCLEOTIDE SEQUENCE [LARGE SCALE GENOMIC DNA]</scope>
    <scope>PROTEIN SEQUENCE OF 49-85</scope>
    <scope>IDENTIFICATION BY MASS SPECTROMETRY</scope>
    <source>
        <tissue>Venom</tissue>
        <tissue>Venom gland</tissue>
    </source>
</reference>
<organism>
    <name type="scientific">Cyriopagopus hainanus</name>
    <name type="common">Chinese bird spider</name>
    <name type="synonym">Haplopelma hainanum</name>
    <dbReference type="NCBI Taxonomy" id="209901"/>
    <lineage>
        <taxon>Eukaryota</taxon>
        <taxon>Metazoa</taxon>
        <taxon>Ecdysozoa</taxon>
        <taxon>Arthropoda</taxon>
        <taxon>Chelicerata</taxon>
        <taxon>Arachnida</taxon>
        <taxon>Araneae</taxon>
        <taxon>Mygalomorphae</taxon>
        <taxon>Theraphosidae</taxon>
        <taxon>Haplopelma</taxon>
    </lineage>
</organism>
<evidence type="ECO:0000250" key="1"/>
<evidence type="ECO:0000255" key="2"/>
<evidence type="ECO:0000305" key="3"/>
<sequence length="84" mass="9385">MKVTLIAILTCAAVLVLHTTAAEELEESQLMEVGMPDTELEAVDEERLFECSVSCEIEKEGNKDCKKKKCKGGWKCKFNMCVKV</sequence>
<feature type="signal peptide" evidence="2">
    <location>
        <begin position="1"/>
        <end position="22"/>
    </location>
</feature>
<feature type="propeptide" id="PRO_0000400753">
    <location>
        <begin position="23"/>
        <end position="47"/>
    </location>
</feature>
<feature type="peptide" id="PRO_0000400754" description="U4-theraphotoxin-Hhn1a">
    <location>
        <begin position="48"/>
        <end position="84"/>
    </location>
</feature>
<feature type="disulfide bond" evidence="1">
    <location>
        <begin position="51"/>
        <end position="65"/>
    </location>
</feature>
<feature type="disulfide bond" evidence="1">
    <location>
        <begin position="55"/>
        <end position="76"/>
    </location>
</feature>
<feature type="disulfide bond" evidence="1">
    <location>
        <begin position="70"/>
        <end position="81"/>
    </location>
</feature>
<accession>D2Y2K6</accession>